<evidence type="ECO:0000250" key="1">
    <source>
        <dbReference type="UniProtKB" id="K5B8L6"/>
    </source>
</evidence>
<evidence type="ECO:0000255" key="2"/>
<evidence type="ECO:0000269" key="3">
    <source>
    </source>
</evidence>
<evidence type="ECO:0000269" key="4">
    <source>
    </source>
</evidence>
<evidence type="ECO:0000269" key="5">
    <source>
    </source>
</evidence>
<evidence type="ECO:0000269" key="6">
    <source>
    </source>
</evidence>
<evidence type="ECO:0000269" key="7">
    <source>
    </source>
</evidence>
<evidence type="ECO:0000269" key="8">
    <source>
    </source>
</evidence>
<evidence type="ECO:0000303" key="9">
    <source>
    </source>
</evidence>
<evidence type="ECO:0000305" key="10"/>
<evidence type="ECO:0000305" key="11">
    <source>
    </source>
</evidence>
<evidence type="ECO:0000305" key="12">
    <source>
    </source>
</evidence>
<evidence type="ECO:0000305" key="13">
    <source>
    </source>
</evidence>
<evidence type="ECO:0000305" key="14">
    <source>
    </source>
</evidence>
<evidence type="ECO:0000305" key="15">
    <source>
    </source>
</evidence>
<keyword id="KW-0046">Antibiotic resistance</keyword>
<keyword id="KW-0997">Cell inner membrane</keyword>
<keyword id="KW-1003">Cell membrane</keyword>
<keyword id="KW-0413">Isomerase</keyword>
<keyword id="KW-0445">Lipid transport</keyword>
<keyword id="KW-0446">Lipid-binding</keyword>
<keyword id="KW-0472">Membrane</keyword>
<keyword id="KW-1185">Reference proteome</keyword>
<keyword id="KW-0812">Transmembrane</keyword>
<keyword id="KW-1133">Transmembrane helix</keyword>
<keyword id="KW-0813">Transport</keyword>
<keyword id="KW-0843">Virulence</keyword>
<sequence>MRAGRRVAISAGSLAVLLGALDTYVVVTIMRDIMNSVGIPINQLHRITWIVTMYLLGYIAAMPLLGRASDRFGRKLMLQVSLAGFIIGSVVTALAGHFGDFHMLIAGRTIQGVASGALLPITLALGADLWSQRNRAGVLGGIGAAQELGSVLGPLYGIFIVWLLHDWRDVFWINVPLTAIAMVMIHFSLPSHDRSTEPERVDLVGGLLLALALGLAVIGLYNPNPDGKHVLPDYGAPLLVGALVAAVAFFGWERFARTRLIDPAGVHFRPFLSALGASVAAGAALMVTLVDVELFGQGVLQMDQAQAAGMLLWFLIALPIGAVTGGWIATRAGDRAVAFAGLLIAAYGYWLISHWPVDLLADRHNILGLFTVPAMHTDLVVAGLGLGLVIGPLSSATLRVVPSAQHGIASAAVVVARMTGMLIGVAALSAWGLYRFNQILAGLSAAIPPNASLLERAAAIGARYQQAFALMYGEIFTITAIVCVFGAVLGLLISGRKEHADEPEVQEQPTLAPQVEPL</sequence>
<dbReference type="EMBL" id="AL123456">
    <property type="protein sequence ID" value="CCP44169.1"/>
    <property type="molecule type" value="Genomic_DNA"/>
</dbReference>
<dbReference type="PIR" id="G70901">
    <property type="entry name" value="G70901"/>
</dbReference>
<dbReference type="RefSeq" id="WP_003407310.1">
    <property type="nucleotide sequence ID" value="NZ_NVQJ01000038.1"/>
</dbReference>
<dbReference type="SMR" id="P9WJY3"/>
<dbReference type="FunCoup" id="P9WJY3">
    <property type="interactions" value="3"/>
</dbReference>
<dbReference type="STRING" id="83332.Rv1410c"/>
<dbReference type="PaxDb" id="83332-Rv1410c"/>
<dbReference type="DNASU" id="886709"/>
<dbReference type="GeneID" id="886709"/>
<dbReference type="KEGG" id="mtu:Rv1410c"/>
<dbReference type="KEGG" id="mtv:RVBD_1410c"/>
<dbReference type="PATRIC" id="fig|83332.111.peg.1569"/>
<dbReference type="TubercuList" id="Rv1410c"/>
<dbReference type="eggNOG" id="COG0477">
    <property type="taxonomic scope" value="Bacteria"/>
</dbReference>
<dbReference type="InParanoid" id="P9WJY3"/>
<dbReference type="OrthoDB" id="3453194at2"/>
<dbReference type="PhylomeDB" id="P9WJY3"/>
<dbReference type="Reactome" id="R-HSA-9636383">
    <property type="pathway name" value="Prevention of phagosomal-lysosomal fusion"/>
</dbReference>
<dbReference type="PHI-base" id="PHI:5578"/>
<dbReference type="Proteomes" id="UP000001584">
    <property type="component" value="Chromosome"/>
</dbReference>
<dbReference type="GO" id="GO:0005829">
    <property type="term" value="C:cytosol"/>
    <property type="evidence" value="ECO:0000304"/>
    <property type="project" value="Reactome"/>
</dbReference>
<dbReference type="GO" id="GO:0005886">
    <property type="term" value="C:plasma membrane"/>
    <property type="evidence" value="ECO:0000314"/>
    <property type="project" value="MTBBASE"/>
</dbReference>
<dbReference type="GO" id="GO:0015562">
    <property type="term" value="F:efflux transmembrane transporter activity"/>
    <property type="evidence" value="ECO:0000314"/>
    <property type="project" value="MTBBASE"/>
</dbReference>
<dbReference type="GO" id="GO:0017089">
    <property type="term" value="F:glycolipid transfer activity"/>
    <property type="evidence" value="ECO:0000304"/>
    <property type="project" value="Reactome"/>
</dbReference>
<dbReference type="GO" id="GO:0016853">
    <property type="term" value="F:isomerase activity"/>
    <property type="evidence" value="ECO:0007669"/>
    <property type="project" value="UniProtKB-KW"/>
</dbReference>
<dbReference type="GO" id="GO:0008289">
    <property type="term" value="F:lipid binding"/>
    <property type="evidence" value="ECO:0007669"/>
    <property type="project" value="UniProtKB-KW"/>
</dbReference>
<dbReference type="GO" id="GO:0022857">
    <property type="term" value="F:transmembrane transporter activity"/>
    <property type="evidence" value="ECO:0000318"/>
    <property type="project" value="GO_Central"/>
</dbReference>
<dbReference type="GO" id="GO:0046677">
    <property type="term" value="P:response to antibiotic"/>
    <property type="evidence" value="ECO:0007669"/>
    <property type="project" value="UniProtKB-KW"/>
</dbReference>
<dbReference type="GO" id="GO:0052170">
    <property type="term" value="P:symbiont-mediated suppression of host innate immune response"/>
    <property type="evidence" value="ECO:0000304"/>
    <property type="project" value="Reactome"/>
</dbReference>
<dbReference type="GO" id="GO:0055085">
    <property type="term" value="P:transmembrane transport"/>
    <property type="evidence" value="ECO:0000314"/>
    <property type="project" value="MTBBASE"/>
</dbReference>
<dbReference type="CDD" id="cd17321">
    <property type="entry name" value="MFS_MMR_MDR_like"/>
    <property type="match status" value="1"/>
</dbReference>
<dbReference type="FunFam" id="1.20.1720.10:FF:000020">
    <property type="entry name" value="Probable triacylglyceride transporter BCG_1471c"/>
    <property type="match status" value="1"/>
</dbReference>
<dbReference type="Gene3D" id="1.20.1250.20">
    <property type="entry name" value="MFS general substrate transporter like domains"/>
    <property type="match status" value="1"/>
</dbReference>
<dbReference type="Gene3D" id="1.20.1720.10">
    <property type="entry name" value="Multidrug resistance protein D"/>
    <property type="match status" value="1"/>
</dbReference>
<dbReference type="InterPro" id="IPR011701">
    <property type="entry name" value="MFS"/>
</dbReference>
<dbReference type="InterPro" id="IPR020846">
    <property type="entry name" value="MFS_dom"/>
</dbReference>
<dbReference type="InterPro" id="IPR036259">
    <property type="entry name" value="MFS_trans_sf"/>
</dbReference>
<dbReference type="InterPro" id="IPR005829">
    <property type="entry name" value="Sugar_transporter_CS"/>
</dbReference>
<dbReference type="PANTHER" id="PTHR23501">
    <property type="entry name" value="MAJOR FACILITATOR SUPERFAMILY"/>
    <property type="match status" value="1"/>
</dbReference>
<dbReference type="PANTHER" id="PTHR23501:SF191">
    <property type="entry name" value="VACUOLAR BASIC AMINO ACID TRANSPORTER 4"/>
    <property type="match status" value="1"/>
</dbReference>
<dbReference type="Pfam" id="PF07690">
    <property type="entry name" value="MFS_1"/>
    <property type="match status" value="1"/>
</dbReference>
<dbReference type="SUPFAM" id="SSF103473">
    <property type="entry name" value="MFS general substrate transporter"/>
    <property type="match status" value="1"/>
</dbReference>
<dbReference type="PROSITE" id="PS50850">
    <property type="entry name" value="MFS"/>
    <property type="match status" value="1"/>
</dbReference>
<name>MFS55_MYCTU</name>
<reference key="1">
    <citation type="journal article" date="1998" name="Nature">
        <title>Deciphering the biology of Mycobacterium tuberculosis from the complete genome sequence.</title>
        <authorList>
            <person name="Cole S.T."/>
            <person name="Brosch R."/>
            <person name="Parkhill J."/>
            <person name="Garnier T."/>
            <person name="Churcher C.M."/>
            <person name="Harris D.E."/>
            <person name="Gordon S.V."/>
            <person name="Eiglmeier K."/>
            <person name="Gas S."/>
            <person name="Barry C.E. III"/>
            <person name="Tekaia F."/>
            <person name="Badcock K."/>
            <person name="Basham D."/>
            <person name="Brown D."/>
            <person name="Chillingworth T."/>
            <person name="Connor R."/>
            <person name="Davies R.M."/>
            <person name="Devlin K."/>
            <person name="Feltwell T."/>
            <person name="Gentles S."/>
            <person name="Hamlin N."/>
            <person name="Holroyd S."/>
            <person name="Hornsby T."/>
            <person name="Jagels K."/>
            <person name="Krogh A."/>
            <person name="McLean J."/>
            <person name="Moule S."/>
            <person name="Murphy L.D."/>
            <person name="Oliver S."/>
            <person name="Osborne J."/>
            <person name="Quail M.A."/>
            <person name="Rajandream M.A."/>
            <person name="Rogers J."/>
            <person name="Rutter S."/>
            <person name="Seeger K."/>
            <person name="Skelton S."/>
            <person name="Squares S."/>
            <person name="Squares R."/>
            <person name="Sulston J.E."/>
            <person name="Taylor K."/>
            <person name="Whitehead S."/>
            <person name="Barrell B.G."/>
        </authorList>
    </citation>
    <scope>NUCLEOTIDE SEQUENCE [LARGE SCALE GENOMIC DNA]</scope>
    <source>
        <strain>ATCC 25618 / H37Rv</strain>
    </source>
</reference>
<reference key="2">
    <citation type="journal article" date="2004" name="Microbes Infect.">
        <title>The knockout of the lprG-Rv1410 operon produces strong attenuation of Mycobacterium tuberculosis.</title>
        <authorList>
            <person name="Bigi F."/>
            <person name="Gioffre A."/>
            <person name="Klepp L."/>
            <person name="Santangelo M.P."/>
            <person name="Alito A."/>
            <person name="Caimi K."/>
            <person name="Meikle V."/>
            <person name="Zumarraga M."/>
            <person name="Taboga O."/>
            <person name="Romano M.I."/>
            <person name="Cataldi A."/>
        </authorList>
    </citation>
    <scope>DISRUPTION PHENOTYPE</scope>
    <scope>VIRULENCE</scope>
    <source>
        <strain>H37Rv</strain>
    </source>
</reference>
<reference key="3">
    <citation type="journal article" date="2008" name="J. Bacteriol.">
        <title>Function of a mycobacterial major facilitator superfamily pump requires a membrane-associated lipoprotein.</title>
        <authorList>
            <person name="Farrow M.F."/>
            <person name="Rubin E.J."/>
        </authorList>
    </citation>
    <scope>FUNCTION</scope>
    <scope>ACTIVITY REGULATION</scope>
    <scope>MUTAGENESIS OF ASP-22</scope>
    <source>
        <strain>H37Rv</strain>
    </source>
</reference>
<reference key="4">
    <citation type="journal article" date="2011" name="BMC Infect. Dis.">
        <title>Role of P27 -P55 operon from Mycobacterium tuberculosis in the resistance to toxic compounds.</title>
        <authorList>
            <person name="Bianco M.V."/>
            <person name="Blanco F.C."/>
            <person name="Imperiale B."/>
            <person name="Forrellad M.A."/>
            <person name="Rocha R.V."/>
            <person name="Klepp L.I."/>
            <person name="Cataldi A.A."/>
            <person name="Morcillo N."/>
            <person name="Bigi F."/>
        </authorList>
    </citation>
    <scope>FUNCTION</scope>
    <scope>DISRUPTION PHENOTYPE</scope>
    <source>
        <strain>H37Rv</strain>
    </source>
</reference>
<reference key="5">
    <citation type="journal article" date="2011" name="Mol. Cell. Proteomics">
        <title>Proteogenomic analysis of Mycobacterium tuberculosis by high resolution mass spectrometry.</title>
        <authorList>
            <person name="Kelkar D.S."/>
            <person name="Kumar D."/>
            <person name="Kumar P."/>
            <person name="Balakrishnan L."/>
            <person name="Muthusamy B."/>
            <person name="Yadav A.K."/>
            <person name="Shrivastava P."/>
            <person name="Marimuthu A."/>
            <person name="Anand S."/>
            <person name="Sundaram H."/>
            <person name="Kingsbury R."/>
            <person name="Harsha H.C."/>
            <person name="Nair B."/>
            <person name="Prasad T.S."/>
            <person name="Chauhan D.S."/>
            <person name="Katoch K."/>
            <person name="Katoch V.M."/>
            <person name="Kumar P."/>
            <person name="Chaerkady R."/>
            <person name="Ramachandran S."/>
            <person name="Dash D."/>
            <person name="Pandey A."/>
        </authorList>
    </citation>
    <scope>IDENTIFICATION BY MASS SPECTROMETRY [LARGE SCALE ANALYSIS]</scope>
    <source>
        <strain>ATCC 25618 / H37Rv</strain>
    </source>
</reference>
<reference key="6">
    <citation type="journal article" date="2014" name="PLoS Pathog.">
        <title>LprG-mediated surface expression of lipoarabinomannan is essential for virulence of Mycobacterium tuberculosis.</title>
        <authorList>
            <person name="Gaur R.L."/>
            <person name="Ren K."/>
            <person name="Blumenthal A."/>
            <person name="Bhamidi S."/>
            <person name="Gibbs S."/>
            <person name="Jackson M."/>
            <person name="Zare R.N."/>
            <person name="Ehrt S."/>
            <person name="Ernst J.D."/>
            <person name="Banaei N."/>
        </authorList>
    </citation>
    <scope>FUNCTION</scope>
    <scope>DISRUPTION PHENOTYPE</scope>
    <source>
        <strain>H37Rv</strain>
    </source>
</reference>
<reference key="7">
    <citation type="journal article" date="2015" name="PLoS Pathog.">
        <title>Correction: LprG-mediated surface expression of lipoarabinomannan is essential for virulence of Mycobacterium tuberculosis.</title>
        <authorList>
            <person name="Gaur R.L."/>
            <person name="Ren K."/>
            <person name="Blumenthal A."/>
            <person name="Bhamidi S."/>
            <person name="Gibbs S."/>
            <person name="Jackson M."/>
            <person name="Zare R.N."/>
            <person name="Ehrt S."/>
            <person name="Ernst J.D."/>
            <person name="Banaei N."/>
        </authorList>
    </citation>
    <scope>ERRATUM OF PUBMED:25232742</scope>
</reference>
<reference key="8">
    <citation type="journal article" date="2014" name="PLoS Pathog.">
        <title>Mycobacterium tuberculosis lipoprotein LprG binds lipoarabinomannan and determines its cell envelope localization to control phagolysosomal fusion.</title>
        <authorList>
            <person name="Shukla S."/>
            <person name="Richardson E.T."/>
            <person name="Athman J.J."/>
            <person name="Shi L."/>
            <person name="Wearsch P.A."/>
            <person name="McDonald D."/>
            <person name="Banaei N."/>
            <person name="Boom W.H."/>
            <person name="Jackson M."/>
            <person name="Harding C.V."/>
        </authorList>
    </citation>
    <scope>FUNCTION</scope>
    <scope>DISRUPTION PHENOTYPE</scope>
</reference>
<reference key="9">
    <citation type="journal article" date="2016" name="PLoS Pathog.">
        <title>Mycobacterial metabolic syndrome: LprG and Rv1410 regulate triacylglyceride levels, growth rate and virulence in Mycobacterium tuberculosis.</title>
        <authorList>
            <person name="Martinot A.J."/>
            <person name="Farrow M."/>
            <person name="Bai L."/>
            <person name="Layre E."/>
            <person name="Cheng T.Y."/>
            <person name="Tsai J.H."/>
            <person name="Iqbal J."/>
            <person name="Annand J.W."/>
            <person name="Sullivan Z.A."/>
            <person name="Hussain M.M."/>
            <person name="Sacchettini J."/>
            <person name="Moody D.B."/>
            <person name="Seeliger J.C."/>
            <person name="Rubin E.J."/>
        </authorList>
    </citation>
    <scope>FUNCTION</scope>
    <scope>SUBCELLULAR LOCATION</scope>
    <scope>DISRUPTION PHENOTYPE</scope>
    <source>
        <strain>H37Rv</strain>
    </source>
</reference>
<reference key="10">
    <citation type="journal article" date="2019" name="Mol. Microbiol.">
        <title>Increased drug permeability of a stiffened mycobacterial outer membrane in cells lacking MFS transporter Rv1410 and lipoprotein LprG.</title>
        <authorList>
            <person name="Hohl M."/>
            <person name="Remm S."/>
            <person name="Eskandarian H.A."/>
            <person name="Dal Molin M."/>
            <person name="Arnold F.M."/>
            <person name="Huerlimann L.M."/>
            <person name="Kruegel A."/>
            <person name="Fantner G.E."/>
            <person name="Sander P."/>
            <person name="Seeger M.A."/>
        </authorList>
    </citation>
    <scope>FUNCTION</scope>
    <scope>DOMAIN</scope>
    <scope>MUTAGENESIS OF ASP-70; 435-ARG--ILE-460; 439-ILE--ARG-456 AND 443-LEU--SER-452</scope>
    <source>
        <strain>H37Rv</strain>
    </source>
</reference>
<reference key="11">
    <citation type="journal article" date="2023" name="Nat. Commun.">
        <title>Structural basis for triacylglyceride extraction from mycobacterial inner membrane by MFS transporter Rv1410.</title>
        <authorList>
            <person name="Remm S."/>
            <person name="De Vecchis D."/>
            <person name="Schoppe J."/>
            <person name="Hutter C.A.J."/>
            <person name="Gonda I."/>
            <person name="Hohl M."/>
            <person name="Newstead S."/>
            <person name="Schafer L.V."/>
            <person name="Seeger M.A."/>
        </authorList>
    </citation>
    <scope>FUNCTION</scope>
    <scope>MUTAGENESIS OF ASP-22; ASP-70; GLY-140; GLU-147; 203-LEU--PHE-255; LEU-289; 363-ARG--PRO-373; ALA-411; ARG-417; LEU-453; TYR-464 AND PHE-468</scope>
    <source>
        <strain>H37Rv</strain>
    </source>
</reference>
<organism>
    <name type="scientific">Mycobacterium tuberculosis (strain ATCC 25618 / H37Rv)</name>
    <dbReference type="NCBI Taxonomy" id="83332"/>
    <lineage>
        <taxon>Bacteria</taxon>
        <taxon>Bacillati</taxon>
        <taxon>Actinomycetota</taxon>
        <taxon>Actinomycetes</taxon>
        <taxon>Mycobacteriales</taxon>
        <taxon>Mycobacteriaceae</taxon>
        <taxon>Mycobacterium</taxon>
        <taxon>Mycobacterium tuberculosis complex</taxon>
    </lineage>
</organism>
<accession>P9WJY3</accession>
<accession>L0T9B4</accession>
<accession>P71678</accession>
<accession>Q7D8H0</accession>
<comment type="function">
    <text evidence="4 5 6 7 11 12 14 15">In association with lipoprotein LprG transports triacylglycerides (TAG) across the inner cell membrane into the periplasm; TAG probably regulates lipid metabolism and growth regulation and plays a structural role in the outer membrane (PubMed:26751071). Mutagenesis and molecular modeling suggests TAG (and maybe other lipids) enters the central cavity of the P55 transporter from within the cell inner membrane via clefts on the cytoplasmic face of P55 between TM5-TM8 and TM2-TM11 (Probable) (PubMed:37833269). From there the lipid is probably transferred to the hydrophobic cavity of LprG (Probable) (PubMed:37833269). Confers resistance to ethidium bromide, requires LprG lipoprotein for normal function (PubMed:18156250). With LprG maintains cell wall permeability (PubMed:21762531). Probably required with LprG for normal surface localization of lipoarabinomannans (LAM) (PubMed:25232742, PubMed:25356793). Overexpression of LprG and Rv1410c leads to increased levels of TAG in the culture medium (PubMed:26751071). Upon expression in L.lactis does not export any tested substrates, does not confer resistance to vancomycin, rifampicin or novobiocin (PubMed:30742339). Probably does not function as a bona fide drug efflux pump, but instead plays a role in outer membrane biogenesis (Probable) (PubMed:30742339).</text>
</comment>
<comment type="activity regulation">
    <text evidence="4">Resistance to ethidium bromide is inhibited by reserpine (PubMed:18156250).</text>
</comment>
<comment type="subcellular location">
    <subcellularLocation>
        <location evidence="13">Cell inner membrane</location>
        <topology evidence="1">Multi-pass membrane protein</topology>
    </subcellularLocation>
</comment>
<comment type="induction">
    <text evidence="3 5">Part of the lprG-Rv1410c operon (PubMed:14998516, PubMed:21762531).</text>
</comment>
<comment type="domain">
    <text evidence="7 15">The periplasmic loop between the last 2 transmembrane domains plays an important functional role (PubMed:30742339). Has a canonical major facilitator superfamily fold with two N- and C-terminal domains of 6 transmembrane helices (TM 1-6 and 7-12) and two other transmembrane helices between the domains (TMA and TMB) that form a hairpin (PubMed:37833269). Between TM9-TM10 is a periplasmic beta-hairpin that extends along the membrane plane, TM11 and TM12 helices are extended 20 Angstroms into the periplasm (PubMed:37833269). Asp-22 is a possible protonation/deprotonation site (PubMed:37833269).</text>
</comment>
<comment type="disruption phenotype">
    <text evidence="3 5 6 11 12">Disruption of only this gene, or of the lrpG-Rv1410c operon leads to increased levels of many triacylglyceride alkylforms; up to 100-fold increase depending on the exact form (PubMed:26751071). Cells grow more slowly on lipid carbon sources, conditions thought to mimic infection, and grow more slowly in infected mice (PubMed:26751071). Disruption of the preceeding gene lprG leads to loss of expression of Rv1410c due to polar effects; in infected BALB/c mice 1.5 and 2.5 log decrease in bacterial load 15 and 35 days after infection (PubMed:14998516). The single lprG mutant increases sensitivity to malachite green, sodium dodecyl sulfate (SDS), isoniazid, ethambutal and ethidium bromide, alters the permeability of the cell wall; both genes are required to fully restore the phenotypes (PubMed:21762531). Single lprG deletion mutant (probably without Rv1410c) has decreased surface-exposed glycolipid lipoarabinomannan (LAM), although cellular LAM content is normal (PubMed:25232742, PubMed:25356793). It also forms smaller colonies on agar (PubMed:25232742). Loss of surface LAM has several consequences; bacteria enter mouse macrophages with reduced efficiency and block mouse macrophage phagosome-lysosome fusion less efficiently than wild-type (PubMed:25232742). Reduced efficiency of mouse macrophage phagosome-lysosome fusion was seen in another study (PubMed:25356793). C57BL/6 mice infected with mutant bacteria have 10-fold less bacterial burden after 10 days and about 2700-fold less burden after 70 days; attenuation of mutant is not rescued in macrophages or mice impaired for reactive oxygen or nitrogen generation (disruption of Ncf1 or iNOS) (PubMed:25232742, PubMed:26751071).</text>
</comment>
<comment type="miscellaneous">
    <text evidence="11 12">Bacterial LAM blocks host cell phagosome-lysosome fusion and is one way in which M.tuberculosis evades the host immune system.</text>
</comment>
<comment type="miscellaneous">
    <text evidence="13">Triacylglycerides accumulate in lipid droplets in the cytoplasm of M.tuberculosis stationary phase and dormant bacteria, and are used as an energy source during starvation (PubMed:26751071).</text>
</comment>
<comment type="similarity">
    <text evidence="10">Belongs to the major facilitator superfamily. P55 (TC 2.A.1.3.34) family.</text>
</comment>
<feature type="chain" id="PRO_0000391006" description="Triacylglyceride transporter Rv1410c">
    <location>
        <begin position="1"/>
        <end position="518"/>
    </location>
</feature>
<feature type="topological domain" description="Cytoplasmic" evidence="10">
    <location>
        <begin position="1"/>
        <end position="6"/>
    </location>
</feature>
<feature type="transmembrane region" description="Helical; Name=TM1" evidence="2">
    <location>
        <begin position="7"/>
        <end position="27"/>
    </location>
</feature>
<feature type="topological domain" description="Periplasmic" evidence="10">
    <location>
        <begin position="28"/>
        <end position="45"/>
    </location>
</feature>
<feature type="transmembrane region" description="Helical; Name=TM2" evidence="2">
    <location>
        <begin position="46"/>
        <end position="66"/>
    </location>
</feature>
<feature type="topological domain" description="Cytoplasmic" evidence="10">
    <location>
        <begin position="67"/>
        <end position="75"/>
    </location>
</feature>
<feature type="transmembrane region" description="Helical; Name=TM3" evidence="2">
    <location>
        <begin position="76"/>
        <end position="96"/>
    </location>
</feature>
<feature type="topological domain" description="Periplasmic" evidence="10">
    <location>
        <begin position="97"/>
        <end position="109"/>
    </location>
</feature>
<feature type="transmembrane region" description="Helical; Name=TM4" evidence="2">
    <location>
        <begin position="110"/>
        <end position="130"/>
    </location>
</feature>
<feature type="topological domain" description="Cytoplasmic" evidence="10">
    <location>
        <begin position="131"/>
        <end position="143"/>
    </location>
</feature>
<feature type="transmembrane region" description="Helical; Name=TM5" evidence="2">
    <location>
        <begin position="144"/>
        <end position="164"/>
    </location>
</feature>
<feature type="topological domain" description="Periplasmic" evidence="10">
    <location>
        <begin position="165"/>
        <end position="169"/>
    </location>
</feature>
<feature type="transmembrane region" description="Helical; Name=TM6" evidence="2">
    <location>
        <begin position="170"/>
        <end position="190"/>
    </location>
</feature>
<feature type="topological domain" description="Cytoplasmic" evidence="10">
    <location>
        <begin position="191"/>
        <end position="200"/>
    </location>
</feature>
<feature type="transmembrane region" description="Helical; Name=TMA" evidence="2">
    <location>
        <begin position="201"/>
        <end position="221"/>
    </location>
</feature>
<feature type="topological domain" description="Periplasmic" evidence="10">
    <location>
        <begin position="222"/>
        <end position="229"/>
    </location>
</feature>
<feature type="transmembrane region" description="Helical; Name=TMB" evidence="2">
    <location>
        <begin position="230"/>
        <end position="250"/>
    </location>
</feature>
<feature type="topological domain" description="Cytoplasmic" evidence="10">
    <location>
        <begin position="251"/>
        <end position="269"/>
    </location>
</feature>
<feature type="transmembrane region" description="Helical; Name=TM7" evidence="2">
    <location>
        <begin position="270"/>
        <end position="290"/>
    </location>
</feature>
<feature type="topological domain" description="Periplasmic" evidence="10">
    <location>
        <begin position="291"/>
        <end position="307"/>
    </location>
</feature>
<feature type="transmembrane region" description="Helical; Name=TM8" evidence="2">
    <location>
        <begin position="308"/>
        <end position="328"/>
    </location>
</feature>
<feature type="topological domain" description="Cytoplasmic" evidence="10">
    <location>
        <begin position="329"/>
        <end position="336"/>
    </location>
</feature>
<feature type="transmembrane region" description="Helical; Name=TM9" evidence="2">
    <location>
        <begin position="337"/>
        <end position="357"/>
    </location>
</feature>
<feature type="topological domain" description="Periplasmic" evidence="10">
    <location>
        <begin position="358"/>
        <end position="378"/>
    </location>
</feature>
<feature type="transmembrane region" description="Helical; Name=TM10" evidence="2">
    <location>
        <begin position="379"/>
        <end position="401"/>
    </location>
</feature>
<feature type="topological domain" description="Cytoplasmic" evidence="10">
    <location>
        <begin position="402"/>
        <end position="407"/>
    </location>
</feature>
<feature type="transmembrane region" description="Helical; Name=TM11" evidence="2">
    <location>
        <begin position="408"/>
        <end position="428"/>
    </location>
</feature>
<feature type="topological domain" description="Periplasmic" evidence="10">
    <location>
        <begin position="429"/>
        <end position="474"/>
    </location>
</feature>
<feature type="transmembrane region" description="Helical; Name=TM12" evidence="2">
    <location>
        <begin position="475"/>
        <end position="495"/>
    </location>
</feature>
<feature type="topological domain" description="Cytoplasmic" evidence="10">
    <location>
        <begin position="496"/>
        <end position="518"/>
    </location>
</feature>
<feature type="region of interest" description="Beta-hairpin" evidence="15">
    <location>
        <begin position="363"/>
        <end position="373"/>
    </location>
</feature>
<feature type="site" description="Protonation/deprotonation site" evidence="15">
    <location>
        <position position="22"/>
    </location>
</feature>
<feature type="site" description="Forms salt bridge with Arg-417, probably closes bottom of cavity" evidence="15">
    <location>
        <position position="147"/>
    </location>
</feature>
<feature type="site" description="Forms salt bridge with Arg-426, probably closes bottom of cavity" evidence="1">
    <location>
        <position position="147"/>
    </location>
</feature>
<feature type="site" description="Forms salt bridge with Gln-147, probably closes bottom of cavity" evidence="15">
    <location>
        <position position="417"/>
    </location>
</feature>
<feature type="site" description="Forms salt bridge with Gln-157, probably closes bottom of cavity" evidence="1">
    <location>
        <position position="417"/>
    </location>
</feature>
<feature type="mutagenesis site" description="Susceptible to ethidium bromide, tested in M.smegmatis." evidence="4">
    <original>D</original>
    <variation>A</variation>
    <location>
        <position position="22"/>
    </location>
</feature>
<feature type="mutagenesis site" description="Decreases resistance to ethidium bromide, tested in M.smegmatis." evidence="4">
    <original>D</original>
    <variation>E</variation>
    <location>
        <position position="22"/>
    </location>
</feature>
<feature type="mutagenesis site" description="No longer complements for vancomycin resistance in M.smegmatis." evidence="8">
    <original>D</original>
    <variation>N</variation>
    <location>
        <position position="22"/>
    </location>
</feature>
<feature type="mutagenesis site" description="No longer complements for antibiotic resistance in M.smegmatis." evidence="7 8">
    <original>D</original>
    <variation>N</variation>
    <location>
        <position position="70"/>
    </location>
</feature>
<feature type="mutagenesis site" description="No longer complements for vancomycin resistance in M.smegmatis, in TM5." evidence="8">
    <original>G</original>
    <variation>D</variation>
    <location>
        <position position="140"/>
    </location>
</feature>
<feature type="mutagenesis site" description="No longer complements for vancomycin resistance in M.smegmatis." evidence="8">
    <original>E</original>
    <variation>Q</variation>
    <location>
        <position position="147"/>
    </location>
</feature>
<feature type="mutagenesis site" description="No longer complements for vancomycin resistance in M.smegmatis, loss of TMA-TMB hairpin." evidence="8">
    <location>
        <begin position="203"/>
        <end position="255"/>
    </location>
</feature>
<feature type="mutagenesis site" description="Still complements for vancomycin resistance in M.smegmatis." evidence="8">
    <original>L</original>
    <variation>D</variation>
    <location>
        <position position="289"/>
    </location>
</feature>
<feature type="mutagenesis site" description="No longer complements for vancomycin resistance in M.smegmatis." evidence="8">
    <original>L</original>
    <variation>R</variation>
    <location>
        <position position="289"/>
    </location>
</feature>
<feature type="mutagenesis site" description="Still complements for vancomycin resistance in M.smegmatis, loss of beta-hairpin." evidence="8">
    <original>RHNILGLFTVP</original>
    <variation>GGGG</variation>
    <location>
        <begin position="363"/>
        <end position="373"/>
    </location>
</feature>
<feature type="mutagenesis site" description="No longer complements for vancomycin resistance in M.smegmatis, in TM11." evidence="8">
    <original>A</original>
    <variation>D</variation>
    <location>
        <position position="411"/>
    </location>
</feature>
<feature type="mutagenesis site" description="No longer complements for vancomycin resistance in M.smegmatis." evidence="8">
    <original>R</original>
    <variation>A</variation>
    <location>
        <position position="417"/>
    </location>
</feature>
<feature type="mutagenesis site" description="No longer complements for vancomycin resistance in M.smegmatis." evidence="7">
    <location>
        <begin position="435"/>
        <end position="460"/>
    </location>
</feature>
<feature type="mutagenesis site" description="No longer complements for vancomycin resistance in M.smegmatis." evidence="7">
    <location>
        <begin position="439"/>
        <end position="456"/>
    </location>
</feature>
<feature type="mutagenesis site" description="Partially complements for antibiotic resistance in M.smegmatis." evidence="7">
    <location>
        <begin position="443"/>
        <end position="452"/>
    </location>
</feature>
<feature type="mutagenesis site" description="Partially complements for antibiotic resistance in M.smegmatis." evidence="8">
    <original>L</original>
    <variation>D</variation>
    <variation>K</variation>
    <location>
        <position position="453"/>
    </location>
</feature>
<feature type="mutagenesis site" description="Partially complements for antibiotic resistance in M.smegmatis." evidence="8">
    <original>Y</original>
    <variation>A</variation>
    <variation>E</variation>
    <location>
        <position position="464"/>
    </location>
</feature>
<feature type="mutagenesis site" description="Partially complements for antibiotic resistance in M.smegmatis." evidence="8">
    <original>F</original>
    <variation>A</variation>
    <variation>E</variation>
    <location>
        <position position="468"/>
    </location>
</feature>
<protein>
    <recommendedName>
        <fullName evidence="9">Triacylglyceride transporter Rv1410c</fullName>
    </recommendedName>
    <alternativeName>
        <fullName>MFS-type drug efflux transporter P55</fullName>
    </alternativeName>
</protein>
<gene>
    <name type="ordered locus">Rv1410c</name>
</gene>
<proteinExistence type="evidence at protein level"/>